<organism>
    <name type="scientific">Nitrosococcus oceani (strain ATCC 19707 / BCRC 17464 / JCM 30415 / NCIMB 11848 / C-107)</name>
    <dbReference type="NCBI Taxonomy" id="323261"/>
    <lineage>
        <taxon>Bacteria</taxon>
        <taxon>Pseudomonadati</taxon>
        <taxon>Pseudomonadota</taxon>
        <taxon>Gammaproteobacteria</taxon>
        <taxon>Chromatiales</taxon>
        <taxon>Chromatiaceae</taxon>
        <taxon>Nitrosococcus</taxon>
    </lineage>
</organism>
<dbReference type="EC" id="2.4.2.7" evidence="1"/>
<dbReference type="EMBL" id="CP000127">
    <property type="protein sequence ID" value="ABA56702.1"/>
    <property type="status" value="ALT_INIT"/>
    <property type="molecule type" value="Genomic_DNA"/>
</dbReference>
<dbReference type="RefSeq" id="WP_002814237.1">
    <property type="nucleotide sequence ID" value="NC_007484.1"/>
</dbReference>
<dbReference type="SMR" id="Q3JEP4"/>
<dbReference type="FunCoup" id="Q3JEP4">
    <property type="interactions" value="405"/>
</dbReference>
<dbReference type="STRING" id="323261.Noc_0169"/>
<dbReference type="KEGG" id="noc:Noc_0169"/>
<dbReference type="eggNOG" id="COG0503">
    <property type="taxonomic scope" value="Bacteria"/>
</dbReference>
<dbReference type="HOGENOM" id="CLU_063339_3_2_6"/>
<dbReference type="InParanoid" id="Q3JEP4"/>
<dbReference type="UniPathway" id="UPA00588">
    <property type="reaction ID" value="UER00646"/>
</dbReference>
<dbReference type="Proteomes" id="UP000006838">
    <property type="component" value="Chromosome"/>
</dbReference>
<dbReference type="GO" id="GO:0005737">
    <property type="term" value="C:cytoplasm"/>
    <property type="evidence" value="ECO:0007669"/>
    <property type="project" value="UniProtKB-SubCell"/>
</dbReference>
<dbReference type="GO" id="GO:0002055">
    <property type="term" value="F:adenine binding"/>
    <property type="evidence" value="ECO:0007669"/>
    <property type="project" value="TreeGrafter"/>
</dbReference>
<dbReference type="GO" id="GO:0003999">
    <property type="term" value="F:adenine phosphoribosyltransferase activity"/>
    <property type="evidence" value="ECO:0007669"/>
    <property type="project" value="UniProtKB-UniRule"/>
</dbReference>
<dbReference type="GO" id="GO:0016208">
    <property type="term" value="F:AMP binding"/>
    <property type="evidence" value="ECO:0007669"/>
    <property type="project" value="TreeGrafter"/>
</dbReference>
<dbReference type="GO" id="GO:0006168">
    <property type="term" value="P:adenine salvage"/>
    <property type="evidence" value="ECO:0007669"/>
    <property type="project" value="InterPro"/>
</dbReference>
<dbReference type="GO" id="GO:0044209">
    <property type="term" value="P:AMP salvage"/>
    <property type="evidence" value="ECO:0007669"/>
    <property type="project" value="UniProtKB-UniRule"/>
</dbReference>
<dbReference type="GO" id="GO:0006166">
    <property type="term" value="P:purine ribonucleoside salvage"/>
    <property type="evidence" value="ECO:0007669"/>
    <property type="project" value="UniProtKB-KW"/>
</dbReference>
<dbReference type="CDD" id="cd06223">
    <property type="entry name" value="PRTases_typeI"/>
    <property type="match status" value="1"/>
</dbReference>
<dbReference type="FunFam" id="3.40.50.2020:FF:000021">
    <property type="entry name" value="Adenine phosphoribosyltransferase"/>
    <property type="match status" value="1"/>
</dbReference>
<dbReference type="Gene3D" id="3.40.50.2020">
    <property type="match status" value="1"/>
</dbReference>
<dbReference type="HAMAP" id="MF_00004">
    <property type="entry name" value="Aden_phosphoribosyltr"/>
    <property type="match status" value="1"/>
</dbReference>
<dbReference type="InterPro" id="IPR005764">
    <property type="entry name" value="Ade_phspho_trans"/>
</dbReference>
<dbReference type="InterPro" id="IPR000836">
    <property type="entry name" value="PRibTrfase_dom"/>
</dbReference>
<dbReference type="InterPro" id="IPR029057">
    <property type="entry name" value="PRTase-like"/>
</dbReference>
<dbReference type="InterPro" id="IPR050054">
    <property type="entry name" value="UPRTase/APRTase"/>
</dbReference>
<dbReference type="NCBIfam" id="TIGR01090">
    <property type="entry name" value="apt"/>
    <property type="match status" value="1"/>
</dbReference>
<dbReference type="NCBIfam" id="NF002634">
    <property type="entry name" value="PRK02304.1-3"/>
    <property type="match status" value="1"/>
</dbReference>
<dbReference type="NCBIfam" id="NF002636">
    <property type="entry name" value="PRK02304.1-5"/>
    <property type="match status" value="1"/>
</dbReference>
<dbReference type="PANTHER" id="PTHR32315">
    <property type="entry name" value="ADENINE PHOSPHORIBOSYLTRANSFERASE"/>
    <property type="match status" value="1"/>
</dbReference>
<dbReference type="PANTHER" id="PTHR32315:SF3">
    <property type="entry name" value="ADENINE PHOSPHORIBOSYLTRANSFERASE"/>
    <property type="match status" value="1"/>
</dbReference>
<dbReference type="Pfam" id="PF00156">
    <property type="entry name" value="Pribosyltran"/>
    <property type="match status" value="1"/>
</dbReference>
<dbReference type="SUPFAM" id="SSF53271">
    <property type="entry name" value="PRTase-like"/>
    <property type="match status" value="1"/>
</dbReference>
<dbReference type="PROSITE" id="PS00103">
    <property type="entry name" value="PUR_PYR_PR_TRANSFER"/>
    <property type="match status" value="1"/>
</dbReference>
<sequence length="171" mass="18558">MERLKTKIRDIPDFPKPGVLFKDITPLVGDPATLRLAVHQLLHPFLEQDITAVGGIEARGFIFGALVAWELGVGFIPLRKSGKLPYEVRSISYQLEYGSASLEAHTDSLGPGDNVLLVDDLLATGGTAKASCELVESLGATVAACAFVIELDFLHGRERLSDYTVHSLVHY</sequence>
<comment type="function">
    <text evidence="1">Catalyzes a salvage reaction resulting in the formation of AMP, that is energically less costly than de novo synthesis.</text>
</comment>
<comment type="catalytic activity">
    <reaction evidence="1">
        <text>AMP + diphosphate = 5-phospho-alpha-D-ribose 1-diphosphate + adenine</text>
        <dbReference type="Rhea" id="RHEA:16609"/>
        <dbReference type="ChEBI" id="CHEBI:16708"/>
        <dbReference type="ChEBI" id="CHEBI:33019"/>
        <dbReference type="ChEBI" id="CHEBI:58017"/>
        <dbReference type="ChEBI" id="CHEBI:456215"/>
        <dbReference type="EC" id="2.4.2.7"/>
    </reaction>
</comment>
<comment type="pathway">
    <text evidence="1">Purine metabolism; AMP biosynthesis via salvage pathway; AMP from adenine: step 1/1.</text>
</comment>
<comment type="subunit">
    <text evidence="1">Homodimer.</text>
</comment>
<comment type="subcellular location">
    <subcellularLocation>
        <location evidence="1">Cytoplasm</location>
    </subcellularLocation>
</comment>
<comment type="similarity">
    <text evidence="1">Belongs to the purine/pyrimidine phosphoribosyltransferase family.</text>
</comment>
<comment type="sequence caution" evidence="2">
    <conflict type="erroneous initiation">
        <sequence resource="EMBL-CDS" id="ABA56702"/>
    </conflict>
</comment>
<protein>
    <recommendedName>
        <fullName evidence="1">Adenine phosphoribosyltransferase</fullName>
        <shortName evidence="1">APRT</shortName>
        <ecNumber evidence="1">2.4.2.7</ecNumber>
    </recommendedName>
</protein>
<reference key="1">
    <citation type="journal article" date="2006" name="Appl. Environ. Microbiol.">
        <title>Complete genome sequence of the marine, chemolithoautotrophic, ammonia-oxidizing bacterium Nitrosococcus oceani ATCC 19707.</title>
        <authorList>
            <person name="Klotz M.G."/>
            <person name="Arp D.J."/>
            <person name="Chain P.S.G."/>
            <person name="El-Sheikh A.F."/>
            <person name="Hauser L.J."/>
            <person name="Hommes N.G."/>
            <person name="Larimer F.W."/>
            <person name="Malfatti S.A."/>
            <person name="Norton J.M."/>
            <person name="Poret-Peterson A.T."/>
            <person name="Vergez L.M."/>
            <person name="Ward B.B."/>
        </authorList>
    </citation>
    <scope>NUCLEOTIDE SEQUENCE [LARGE SCALE GENOMIC DNA]</scope>
    <source>
        <strain>ATCC 19707 / BCRC 17464 / JCM 30415 / NCIMB 11848 / C-107</strain>
    </source>
</reference>
<keyword id="KW-0963">Cytoplasm</keyword>
<keyword id="KW-0328">Glycosyltransferase</keyword>
<keyword id="KW-0660">Purine salvage</keyword>
<keyword id="KW-1185">Reference proteome</keyword>
<keyword id="KW-0808">Transferase</keyword>
<proteinExistence type="inferred from homology"/>
<evidence type="ECO:0000255" key="1">
    <source>
        <dbReference type="HAMAP-Rule" id="MF_00004"/>
    </source>
</evidence>
<evidence type="ECO:0000305" key="2"/>
<gene>
    <name evidence="1" type="primary">apt</name>
    <name type="ordered locus">Noc_0169</name>
</gene>
<feature type="chain" id="PRO_0000321376" description="Adenine phosphoribosyltransferase">
    <location>
        <begin position="1"/>
        <end position="171"/>
    </location>
</feature>
<accession>Q3JEP4</accession>
<name>APT_NITOC</name>